<gene>
    <name evidence="8" type="primary">ENODL17</name>
    <name evidence="9" type="synonym">NRFG3</name>
    <name evidence="11 12" type="ordered locus">Os06g0553800</name>
    <name evidence="10" type="ordered locus">LOC_Os06g36010</name>
    <name evidence="13" type="ORF">OsJ_21667</name>
    <name evidence="12" type="ORF">OSNPB_060553800</name>
    <name evidence="11" type="ORF">P0427B07.38-1</name>
</gene>
<proteinExistence type="evidence at transcript level"/>
<evidence type="ECO:0000255" key="1"/>
<evidence type="ECO:0000255" key="2">
    <source>
        <dbReference type="PROSITE-ProRule" id="PRU00498"/>
    </source>
</evidence>
<evidence type="ECO:0000255" key="3">
    <source>
        <dbReference type="PROSITE-ProRule" id="PRU00818"/>
    </source>
</evidence>
<evidence type="ECO:0000256" key="4">
    <source>
        <dbReference type="SAM" id="MobiDB-lite"/>
    </source>
</evidence>
<evidence type="ECO:0000269" key="5">
    <source>
    </source>
</evidence>
<evidence type="ECO:0000269" key="6">
    <source>
    </source>
</evidence>
<evidence type="ECO:0000269" key="7">
    <source>
    </source>
</evidence>
<evidence type="ECO:0000303" key="8">
    <source>
    </source>
</evidence>
<evidence type="ECO:0000303" key="9">
    <source>
    </source>
</evidence>
<evidence type="ECO:0000305" key="10"/>
<evidence type="ECO:0000312" key="11">
    <source>
        <dbReference type="EMBL" id="BAD53679.1"/>
    </source>
</evidence>
<evidence type="ECO:0000312" key="12">
    <source>
        <dbReference type="EMBL" id="BAS98209.1"/>
    </source>
</evidence>
<evidence type="ECO:0000312" key="13">
    <source>
        <dbReference type="EMBL" id="EAZ37327.1"/>
    </source>
</evidence>
<accession>Q5Z9C8</accession>
<accession>A0A0N7KM97</accession>
<accession>A3BCN8</accession>
<feature type="signal peptide" evidence="1">
    <location>
        <begin position="1"/>
        <end position="21"/>
    </location>
</feature>
<feature type="chain" id="PRO_5013532565" description="Early nodulin-like protein 17">
    <location>
        <begin position="22"/>
        <end position="156"/>
    </location>
</feature>
<feature type="propeptide" id="PRO_0000457752" description="Removed in mature form" evidence="1">
    <location>
        <begin position="157"/>
        <end position="185"/>
    </location>
</feature>
<feature type="domain" description="Phytocyanin" evidence="3">
    <location>
        <begin position="37"/>
        <end position="137"/>
    </location>
</feature>
<feature type="region of interest" description="Disordered" evidence="4">
    <location>
        <begin position="136"/>
        <end position="155"/>
    </location>
</feature>
<feature type="lipid moiety-binding region" description="GPI-anchor amidated serine" evidence="1">
    <location>
        <position position="156"/>
    </location>
</feature>
<feature type="glycosylation site" description="N-linked (GlcNAc...) asparagine" evidence="2">
    <location>
        <position position="79"/>
    </location>
</feature>
<feature type="glycosylation site" description="N-linked (GlcNAc...) asparagine" evidence="2">
    <location>
        <position position="94"/>
    </location>
</feature>
<feature type="disulfide bond" evidence="3">
    <location>
        <begin position="93"/>
        <end position="125"/>
    </location>
</feature>
<name>ENL17_ORYSJ</name>
<sequence>MARRDQLVSFLCFFLIVSAVAGGLCVSATVLPMRVGKQYVVGGRSGWRTPPPASVDLYAKWAAGIRFYVADSIEFVYKNDSVVKVDKFGYYHCNATAAAANDGSVLFLLDAPGFAYFSSADADHCKKGQRLMINVDSAPSPSPSPSPAPQEAATASAATSSSAATAAHALLLAAMAMMGLILGEW</sequence>
<keyword id="KW-1003">Cell membrane</keyword>
<keyword id="KW-1015">Disulfide bond</keyword>
<keyword id="KW-0325">Glycoprotein</keyword>
<keyword id="KW-0336">GPI-anchor</keyword>
<keyword id="KW-0449">Lipoprotein</keyword>
<keyword id="KW-0472">Membrane</keyword>
<keyword id="KW-1185">Reference proteome</keyword>
<keyword id="KW-0732">Signal</keyword>
<comment type="function">
    <text evidence="7 8">May act as a carbohydrate transporter (PubMed:24470637). Required for male fertility and seed yield (PubMed:32494867).</text>
</comment>
<comment type="subcellular location">
    <subcellularLocation>
        <location evidence="1">Cell membrane</location>
        <topology evidence="1">Lipid-anchor</topology>
        <topology evidence="1">GPI-anchor</topology>
    </subcellularLocation>
</comment>
<comment type="tissue specificity">
    <text evidence="5 6">Expressed ubiquitously (PubMed:21984902). Accumulates mainly in anthers, stigmas and ovaries (PubMed:30675653).</text>
</comment>
<comment type="disruption phenotype">
    <text evidence="7">Reduced pollen fertility leading to lower seed setting and altered yield.</text>
</comment>
<comment type="similarity">
    <text evidence="10">Belongs to the early nodulin-like (ENODL) family.</text>
</comment>
<comment type="sequence caution" evidence="10">
    <conflict type="erroneous gene model prediction">
        <sequence resource="EMBL-CDS" id="EAZ37327"/>
    </conflict>
</comment>
<reference key="1">
    <citation type="journal article" date="2005" name="Nature">
        <title>The map-based sequence of the rice genome.</title>
        <authorList>
            <consortium name="International rice genome sequencing project (IRGSP)"/>
        </authorList>
    </citation>
    <scope>NUCLEOTIDE SEQUENCE [LARGE SCALE GENOMIC DNA]</scope>
    <source>
        <strain>cv. Nipponbare</strain>
    </source>
</reference>
<reference key="2">
    <citation type="journal article" date="2008" name="Nucleic Acids Res.">
        <title>The rice annotation project database (RAP-DB): 2008 update.</title>
        <authorList>
            <consortium name="The rice annotation project (RAP)"/>
        </authorList>
    </citation>
    <scope>GENOME REANNOTATION</scope>
    <source>
        <strain>cv. Nipponbare</strain>
    </source>
</reference>
<reference key="3">
    <citation type="journal article" date="2013" name="Rice">
        <title>Improvement of the Oryza sativa Nipponbare reference genome using next generation sequence and optical map data.</title>
        <authorList>
            <person name="Kawahara Y."/>
            <person name="de la Bastide M."/>
            <person name="Hamilton J.P."/>
            <person name="Kanamori H."/>
            <person name="McCombie W.R."/>
            <person name="Ouyang S."/>
            <person name="Schwartz D.C."/>
            <person name="Tanaka T."/>
            <person name="Wu J."/>
            <person name="Zhou S."/>
            <person name="Childs K.L."/>
            <person name="Davidson R.M."/>
            <person name="Lin H."/>
            <person name="Quesada-Ocampo L."/>
            <person name="Vaillancourt B."/>
            <person name="Sakai H."/>
            <person name="Lee S.S."/>
            <person name="Kim J."/>
            <person name="Numa H."/>
            <person name="Itoh T."/>
            <person name="Buell C.R."/>
            <person name="Matsumoto T."/>
        </authorList>
    </citation>
    <scope>GENOME REANNOTATION</scope>
    <source>
        <strain>cv. Nipponbare</strain>
    </source>
</reference>
<reference key="4">
    <citation type="journal article" date="2005" name="PLoS Biol.">
        <title>The genomes of Oryza sativa: a history of duplications.</title>
        <authorList>
            <person name="Yu J."/>
            <person name="Wang J."/>
            <person name="Lin W."/>
            <person name="Li S."/>
            <person name="Li H."/>
            <person name="Zhou J."/>
            <person name="Ni P."/>
            <person name="Dong W."/>
            <person name="Hu S."/>
            <person name="Zeng C."/>
            <person name="Zhang J."/>
            <person name="Zhang Y."/>
            <person name="Li R."/>
            <person name="Xu Z."/>
            <person name="Li S."/>
            <person name="Li X."/>
            <person name="Zheng H."/>
            <person name="Cong L."/>
            <person name="Lin L."/>
            <person name="Yin J."/>
            <person name="Geng J."/>
            <person name="Li G."/>
            <person name="Shi J."/>
            <person name="Liu J."/>
            <person name="Lv H."/>
            <person name="Li J."/>
            <person name="Wang J."/>
            <person name="Deng Y."/>
            <person name="Ran L."/>
            <person name="Shi X."/>
            <person name="Wang X."/>
            <person name="Wu Q."/>
            <person name="Li C."/>
            <person name="Ren X."/>
            <person name="Wang J."/>
            <person name="Wang X."/>
            <person name="Li D."/>
            <person name="Liu D."/>
            <person name="Zhang X."/>
            <person name="Ji Z."/>
            <person name="Zhao W."/>
            <person name="Sun Y."/>
            <person name="Zhang Z."/>
            <person name="Bao J."/>
            <person name="Han Y."/>
            <person name="Dong L."/>
            <person name="Ji J."/>
            <person name="Chen P."/>
            <person name="Wu S."/>
            <person name="Liu J."/>
            <person name="Xiao Y."/>
            <person name="Bu D."/>
            <person name="Tan J."/>
            <person name="Yang L."/>
            <person name="Ye C."/>
            <person name="Zhang J."/>
            <person name="Xu J."/>
            <person name="Zhou Y."/>
            <person name="Yu Y."/>
            <person name="Zhang B."/>
            <person name="Zhuang S."/>
            <person name="Wei H."/>
            <person name="Liu B."/>
            <person name="Lei M."/>
            <person name="Yu H."/>
            <person name="Li Y."/>
            <person name="Xu H."/>
            <person name="Wei S."/>
            <person name="He X."/>
            <person name="Fang L."/>
            <person name="Zhang Z."/>
            <person name="Zhang Y."/>
            <person name="Huang X."/>
            <person name="Su Z."/>
            <person name="Tong W."/>
            <person name="Li J."/>
            <person name="Tong Z."/>
            <person name="Li S."/>
            <person name="Ye J."/>
            <person name="Wang L."/>
            <person name="Fang L."/>
            <person name="Lei T."/>
            <person name="Chen C.-S."/>
            <person name="Chen H.-C."/>
            <person name="Xu Z."/>
            <person name="Li H."/>
            <person name="Huang H."/>
            <person name="Zhang F."/>
            <person name="Xu H."/>
            <person name="Li N."/>
            <person name="Zhao C."/>
            <person name="Li S."/>
            <person name="Dong L."/>
            <person name="Huang Y."/>
            <person name="Li L."/>
            <person name="Xi Y."/>
            <person name="Qi Q."/>
            <person name="Li W."/>
            <person name="Zhang B."/>
            <person name="Hu W."/>
            <person name="Zhang Y."/>
            <person name="Tian X."/>
            <person name="Jiao Y."/>
            <person name="Liang X."/>
            <person name="Jin J."/>
            <person name="Gao L."/>
            <person name="Zheng W."/>
            <person name="Hao B."/>
            <person name="Liu S.-M."/>
            <person name="Wang W."/>
            <person name="Yuan L."/>
            <person name="Cao M."/>
            <person name="McDermott J."/>
            <person name="Samudrala R."/>
            <person name="Wang J."/>
            <person name="Wong G.K.-S."/>
            <person name="Yang H."/>
        </authorList>
    </citation>
    <scope>NUCLEOTIDE SEQUENCE [LARGE SCALE GENOMIC DNA]</scope>
    <source>
        <strain>cv. Nipponbare</strain>
    </source>
</reference>
<reference key="5">
    <citation type="journal article" date="2003" name="Science">
        <title>Collection, mapping, and annotation of over 28,000 cDNA clones from japonica rice.</title>
        <authorList>
            <consortium name="The rice full-length cDNA consortium"/>
        </authorList>
    </citation>
    <scope>NUCLEOTIDE SEQUENCE [LARGE SCALE MRNA]</scope>
    <source>
        <strain>cv. Nipponbare</strain>
    </source>
</reference>
<reference key="6">
    <citation type="journal article" date="2011" name="PLoS ONE">
        <title>The phytocyanin gene family in rice (Oryza sativa L.): genome-wide identification, classification and transcriptional analysis.</title>
        <authorList>
            <person name="Ma H."/>
            <person name="Zhao H."/>
            <person name="Liu Z."/>
            <person name="Zhao J."/>
        </authorList>
    </citation>
    <scope>TISSUE SPECIFICITY</scope>
    <source>
        <strain>cv. Nipponbare</strain>
    </source>
</reference>
<reference key="7">
    <citation type="journal article" date="2014" name="Plant Cell Physiol.">
        <title>Emerging functions of nodulin-like proteins in non-nodulating plant species.</title>
        <authorList>
            <person name="Denance N."/>
            <person name="Szurek B."/>
            <person name="Noel L.D."/>
        </authorList>
    </citation>
    <scope>REVIEW ON NODULIN-LIKE PROTEINS</scope>
</reference>
<reference key="8">
    <citation type="journal article" date="2019" name="Protoplasma">
        <title>Gene expression and localization of arabinogalactan proteins during the development of anther, ovule, and embryo in rice.</title>
        <authorList>
            <person name="Ma T."/>
            <person name="Dong F."/>
            <person name="Luan D."/>
            <person name="Hu H."/>
            <person name="Zhao J."/>
        </authorList>
    </citation>
    <scope>TISSUE SPECIFICITY</scope>
    <source>
        <strain>cv. Nipponbare</strain>
    </source>
</reference>
<reference key="9">
    <citation type="journal article" date="2020" name="Rice">
        <title>Production assessment and genome comparison revealed high yield potential and novel specific alleles associated with fertility and yield in neo-tetraploid rice.</title>
        <authorList>
            <person name="Yu H."/>
            <person name="Shahid M.Q."/>
            <person name="Li Q."/>
            <person name="Li Y."/>
            <person name="Li C."/>
            <person name="Lu Z."/>
            <person name="Wu J."/>
            <person name="Zhang Z."/>
            <person name="Liu X."/>
        </authorList>
    </citation>
    <scope>FUNCTION</scope>
    <scope>DISRUPTION PHENOTYPE</scope>
</reference>
<dbReference type="EMBL" id="AP003682">
    <property type="protein sequence ID" value="BAD53679.1"/>
    <property type="molecule type" value="Genomic_DNA"/>
</dbReference>
<dbReference type="EMBL" id="AP008212">
    <property type="protein sequence ID" value="BAF19759.1"/>
    <property type="molecule type" value="Genomic_DNA"/>
</dbReference>
<dbReference type="EMBL" id="AP014962">
    <property type="protein sequence ID" value="BAS98209.1"/>
    <property type="molecule type" value="Genomic_DNA"/>
</dbReference>
<dbReference type="EMBL" id="CM000143">
    <property type="protein sequence ID" value="EAZ37327.1"/>
    <property type="status" value="ALT_SEQ"/>
    <property type="molecule type" value="Genomic_DNA"/>
</dbReference>
<dbReference type="EMBL" id="AK072932">
    <property type="status" value="NOT_ANNOTATED_CDS"/>
    <property type="molecule type" value="mRNA"/>
</dbReference>
<dbReference type="SMR" id="Q5Z9C8"/>
<dbReference type="STRING" id="39947.Q5Z9C8"/>
<dbReference type="PaxDb" id="39947-Q5Z9C8"/>
<dbReference type="EnsemblPlants" id="Os06t0553800-01">
    <property type="protein sequence ID" value="Os06t0553800-01"/>
    <property type="gene ID" value="Os06g0553800"/>
</dbReference>
<dbReference type="Gramene" id="Os06t0553800-01">
    <property type="protein sequence ID" value="Os06t0553800-01"/>
    <property type="gene ID" value="Os06g0553800"/>
</dbReference>
<dbReference type="KEGG" id="dosa:Os06g0553800"/>
<dbReference type="eggNOG" id="ENOG502S4F1">
    <property type="taxonomic scope" value="Eukaryota"/>
</dbReference>
<dbReference type="HOGENOM" id="CLU_058719_1_3_1"/>
<dbReference type="InParanoid" id="Q5Z9C8"/>
<dbReference type="OMA" id="DKFGYYH"/>
<dbReference type="Proteomes" id="UP000000763">
    <property type="component" value="Chromosome 6"/>
</dbReference>
<dbReference type="Proteomes" id="UP000007752">
    <property type="component" value="Chromosome 6"/>
</dbReference>
<dbReference type="Proteomes" id="UP000059680">
    <property type="component" value="Chromosome 6"/>
</dbReference>
<dbReference type="GO" id="GO:0005886">
    <property type="term" value="C:plasma membrane"/>
    <property type="evidence" value="ECO:0000318"/>
    <property type="project" value="GO_Central"/>
</dbReference>
<dbReference type="GO" id="GO:0098552">
    <property type="term" value="C:side of membrane"/>
    <property type="evidence" value="ECO:0007669"/>
    <property type="project" value="UniProtKB-KW"/>
</dbReference>
<dbReference type="GO" id="GO:0009055">
    <property type="term" value="F:electron transfer activity"/>
    <property type="evidence" value="ECO:0007669"/>
    <property type="project" value="InterPro"/>
</dbReference>
<dbReference type="FunFam" id="2.60.40.420:FF:000090">
    <property type="entry name" value="NtEPc-like"/>
    <property type="match status" value="1"/>
</dbReference>
<dbReference type="Gene3D" id="2.60.40.420">
    <property type="entry name" value="Cupredoxins - blue copper proteins"/>
    <property type="match status" value="1"/>
</dbReference>
<dbReference type="InterPro" id="IPR008972">
    <property type="entry name" value="Cupredoxin"/>
</dbReference>
<dbReference type="InterPro" id="IPR039391">
    <property type="entry name" value="Phytocyanin-like"/>
</dbReference>
<dbReference type="InterPro" id="IPR003245">
    <property type="entry name" value="Phytocyanin_dom"/>
</dbReference>
<dbReference type="PANTHER" id="PTHR33021">
    <property type="entry name" value="BLUE COPPER PROTEIN"/>
    <property type="match status" value="1"/>
</dbReference>
<dbReference type="PANTHER" id="PTHR33021:SF234">
    <property type="entry name" value="EARLY NODULIN-LIKE PROTEIN 7"/>
    <property type="match status" value="1"/>
</dbReference>
<dbReference type="Pfam" id="PF02298">
    <property type="entry name" value="Cu_bind_like"/>
    <property type="match status" value="1"/>
</dbReference>
<dbReference type="SUPFAM" id="SSF49503">
    <property type="entry name" value="Cupredoxins"/>
    <property type="match status" value="1"/>
</dbReference>
<dbReference type="PROSITE" id="PS51485">
    <property type="entry name" value="PHYTOCYANIN"/>
    <property type="match status" value="1"/>
</dbReference>
<organism>
    <name type="scientific">Oryza sativa subsp. japonica</name>
    <name type="common">Rice</name>
    <dbReference type="NCBI Taxonomy" id="39947"/>
    <lineage>
        <taxon>Eukaryota</taxon>
        <taxon>Viridiplantae</taxon>
        <taxon>Streptophyta</taxon>
        <taxon>Embryophyta</taxon>
        <taxon>Tracheophyta</taxon>
        <taxon>Spermatophyta</taxon>
        <taxon>Magnoliopsida</taxon>
        <taxon>Liliopsida</taxon>
        <taxon>Poales</taxon>
        <taxon>Poaceae</taxon>
        <taxon>BOP clade</taxon>
        <taxon>Oryzoideae</taxon>
        <taxon>Oryzeae</taxon>
        <taxon>Oryzinae</taxon>
        <taxon>Oryza</taxon>
        <taxon>Oryza sativa</taxon>
    </lineage>
</organism>
<protein>
    <recommendedName>
        <fullName evidence="8">Early nodulin-like protein 17</fullName>
        <shortName evidence="8">OsENODL17</shortName>
    </recommendedName>
    <alternativeName>
        <fullName evidence="9">Protein NEO-TETRAPLOID RICE FERTILITY RELATED GENE 3</fullName>
        <shortName evidence="9">OsNRFG3</shortName>
    </alternativeName>
</protein>